<gene>
    <name evidence="1" type="primary">pfkA</name>
    <name type="ordered locus">FMG_1002</name>
</gene>
<feature type="chain" id="PRO_1000120046" description="ATP-dependent 6-phosphofructokinase">
    <location>
        <begin position="1"/>
        <end position="319"/>
    </location>
</feature>
<feature type="active site" description="Proton acceptor" evidence="1">
    <location>
        <position position="127"/>
    </location>
</feature>
<feature type="binding site" evidence="1">
    <location>
        <position position="11"/>
    </location>
    <ligand>
        <name>ATP</name>
        <dbReference type="ChEBI" id="CHEBI:30616"/>
    </ligand>
</feature>
<feature type="binding site" evidence="1">
    <location>
        <begin position="21"/>
        <end position="25"/>
    </location>
    <ligand>
        <name>ADP</name>
        <dbReference type="ChEBI" id="CHEBI:456216"/>
        <note>allosteric activator; ligand shared between dimeric partners</note>
    </ligand>
</feature>
<feature type="binding site" evidence="1">
    <location>
        <begin position="72"/>
        <end position="73"/>
    </location>
    <ligand>
        <name>ATP</name>
        <dbReference type="ChEBI" id="CHEBI:30616"/>
    </ligand>
</feature>
<feature type="binding site" evidence="1">
    <location>
        <begin position="102"/>
        <end position="105"/>
    </location>
    <ligand>
        <name>ATP</name>
        <dbReference type="ChEBI" id="CHEBI:30616"/>
    </ligand>
</feature>
<feature type="binding site" evidence="1">
    <location>
        <position position="103"/>
    </location>
    <ligand>
        <name>Mg(2+)</name>
        <dbReference type="ChEBI" id="CHEBI:18420"/>
        <note>catalytic</note>
    </ligand>
</feature>
<feature type="binding site" description="in other chain" evidence="1">
    <location>
        <begin position="125"/>
        <end position="127"/>
    </location>
    <ligand>
        <name>substrate</name>
        <note>ligand shared between dimeric partners</note>
    </ligand>
</feature>
<feature type="binding site" description="in other chain" evidence="1">
    <location>
        <position position="154"/>
    </location>
    <ligand>
        <name>ADP</name>
        <dbReference type="ChEBI" id="CHEBI:456216"/>
        <note>allosteric activator; ligand shared between dimeric partners</note>
    </ligand>
</feature>
<feature type="binding site" evidence="1">
    <location>
        <position position="162"/>
    </location>
    <ligand>
        <name>substrate</name>
        <note>ligand shared between dimeric partners</note>
    </ligand>
</feature>
<feature type="binding site" description="in other chain" evidence="1">
    <location>
        <begin position="169"/>
        <end position="171"/>
    </location>
    <ligand>
        <name>substrate</name>
        <note>ligand shared between dimeric partners</note>
    </ligand>
</feature>
<feature type="binding site" description="in other chain" evidence="1">
    <location>
        <begin position="185"/>
        <end position="187"/>
    </location>
    <ligand>
        <name>ADP</name>
        <dbReference type="ChEBI" id="CHEBI:456216"/>
        <note>allosteric activator; ligand shared between dimeric partners</note>
    </ligand>
</feature>
<feature type="binding site" description="in other chain" evidence="1">
    <location>
        <position position="211"/>
    </location>
    <ligand>
        <name>ADP</name>
        <dbReference type="ChEBI" id="CHEBI:456216"/>
        <note>allosteric activator; ligand shared between dimeric partners</note>
    </ligand>
</feature>
<feature type="binding site" description="in other chain" evidence="1">
    <location>
        <begin position="213"/>
        <end position="215"/>
    </location>
    <ligand>
        <name>ADP</name>
        <dbReference type="ChEBI" id="CHEBI:456216"/>
        <note>allosteric activator; ligand shared between dimeric partners</note>
    </ligand>
</feature>
<feature type="binding site" description="in other chain" evidence="1">
    <location>
        <position position="222"/>
    </location>
    <ligand>
        <name>substrate</name>
        <note>ligand shared between dimeric partners</note>
    </ligand>
</feature>
<feature type="binding site" evidence="1">
    <location>
        <position position="243"/>
    </location>
    <ligand>
        <name>substrate</name>
        <note>ligand shared between dimeric partners</note>
    </ligand>
</feature>
<feature type="binding site" description="in other chain" evidence="1">
    <location>
        <begin position="249"/>
        <end position="252"/>
    </location>
    <ligand>
        <name>substrate</name>
        <note>ligand shared between dimeric partners</note>
    </ligand>
</feature>
<proteinExistence type="inferred from homology"/>
<protein>
    <recommendedName>
        <fullName evidence="1">ATP-dependent 6-phosphofructokinase</fullName>
        <shortName evidence="1">ATP-PFK</shortName>
        <shortName evidence="1">Phosphofructokinase</shortName>
        <ecNumber evidence="1">2.7.1.11</ecNumber>
    </recommendedName>
    <alternativeName>
        <fullName evidence="1">Phosphohexokinase</fullName>
    </alternativeName>
</protein>
<sequence length="319" mass="34277">MKTIAILTSGGDAPGMNACIRSIARTCIYNGIRVMGIRSGYDGLMNGNIYEMNVSSVADIIHRGGTILGSARCPEFKTEEGQKKGAQILKDFGIDGLVVLGGDGSFKGASALSKIGISTIGIPCTIDNDMGYTDYTIGFFTAVETVSDAISKLRDTSSSHGRANIIEVMGRNCGDIALYSGVASGAESILVPEVELNIDEVTEKIERGRKRGKLHHLIMLAEGVGGAYDIKNMIEEKTGVETKVTILGHVQRGGTPCTFDRLMATQMGNLAVKLIMEEKTDLAIAMKDNKIITVPIDEAVTTKRKFRDDLYEISKEISI</sequence>
<dbReference type="EC" id="2.7.1.11" evidence="1"/>
<dbReference type="EMBL" id="AP008971">
    <property type="protein sequence ID" value="BAG08420.1"/>
    <property type="molecule type" value="Genomic_DNA"/>
</dbReference>
<dbReference type="RefSeq" id="WP_002837667.1">
    <property type="nucleotide sequence ID" value="NC_010376.1"/>
</dbReference>
<dbReference type="SMR" id="B0S230"/>
<dbReference type="STRING" id="334413.FMG_1002"/>
<dbReference type="KEGG" id="fma:FMG_1002"/>
<dbReference type="eggNOG" id="COG0205">
    <property type="taxonomic scope" value="Bacteria"/>
</dbReference>
<dbReference type="HOGENOM" id="CLU_020655_0_1_9"/>
<dbReference type="UniPathway" id="UPA00109">
    <property type="reaction ID" value="UER00182"/>
</dbReference>
<dbReference type="Proteomes" id="UP000001319">
    <property type="component" value="Chromosome"/>
</dbReference>
<dbReference type="GO" id="GO:0005945">
    <property type="term" value="C:6-phosphofructokinase complex"/>
    <property type="evidence" value="ECO:0007669"/>
    <property type="project" value="TreeGrafter"/>
</dbReference>
<dbReference type="GO" id="GO:0003872">
    <property type="term" value="F:6-phosphofructokinase activity"/>
    <property type="evidence" value="ECO:0007669"/>
    <property type="project" value="UniProtKB-UniRule"/>
</dbReference>
<dbReference type="GO" id="GO:0016208">
    <property type="term" value="F:AMP binding"/>
    <property type="evidence" value="ECO:0007669"/>
    <property type="project" value="TreeGrafter"/>
</dbReference>
<dbReference type="GO" id="GO:0005524">
    <property type="term" value="F:ATP binding"/>
    <property type="evidence" value="ECO:0007669"/>
    <property type="project" value="UniProtKB-KW"/>
</dbReference>
<dbReference type="GO" id="GO:0070095">
    <property type="term" value="F:fructose-6-phosphate binding"/>
    <property type="evidence" value="ECO:0007669"/>
    <property type="project" value="TreeGrafter"/>
</dbReference>
<dbReference type="GO" id="GO:0042802">
    <property type="term" value="F:identical protein binding"/>
    <property type="evidence" value="ECO:0007669"/>
    <property type="project" value="TreeGrafter"/>
</dbReference>
<dbReference type="GO" id="GO:0046872">
    <property type="term" value="F:metal ion binding"/>
    <property type="evidence" value="ECO:0007669"/>
    <property type="project" value="UniProtKB-KW"/>
</dbReference>
<dbReference type="GO" id="GO:0048029">
    <property type="term" value="F:monosaccharide binding"/>
    <property type="evidence" value="ECO:0007669"/>
    <property type="project" value="TreeGrafter"/>
</dbReference>
<dbReference type="GO" id="GO:0061621">
    <property type="term" value="P:canonical glycolysis"/>
    <property type="evidence" value="ECO:0007669"/>
    <property type="project" value="TreeGrafter"/>
</dbReference>
<dbReference type="GO" id="GO:0030388">
    <property type="term" value="P:fructose 1,6-bisphosphate metabolic process"/>
    <property type="evidence" value="ECO:0007669"/>
    <property type="project" value="TreeGrafter"/>
</dbReference>
<dbReference type="GO" id="GO:0006002">
    <property type="term" value="P:fructose 6-phosphate metabolic process"/>
    <property type="evidence" value="ECO:0007669"/>
    <property type="project" value="InterPro"/>
</dbReference>
<dbReference type="FunFam" id="3.40.50.450:FF:000001">
    <property type="entry name" value="ATP-dependent 6-phosphofructokinase"/>
    <property type="match status" value="1"/>
</dbReference>
<dbReference type="FunFam" id="3.40.50.460:FF:000002">
    <property type="entry name" value="ATP-dependent 6-phosphofructokinase"/>
    <property type="match status" value="1"/>
</dbReference>
<dbReference type="Gene3D" id="3.40.50.450">
    <property type="match status" value="1"/>
</dbReference>
<dbReference type="Gene3D" id="3.40.50.460">
    <property type="entry name" value="Phosphofructokinase domain"/>
    <property type="match status" value="1"/>
</dbReference>
<dbReference type="HAMAP" id="MF_00339">
    <property type="entry name" value="Phosphofructokinase_I_B1"/>
    <property type="match status" value="1"/>
</dbReference>
<dbReference type="InterPro" id="IPR022953">
    <property type="entry name" value="ATP_PFK"/>
</dbReference>
<dbReference type="InterPro" id="IPR012003">
    <property type="entry name" value="ATP_PFK_prok-type"/>
</dbReference>
<dbReference type="InterPro" id="IPR012828">
    <property type="entry name" value="PFKA_ATP_prok"/>
</dbReference>
<dbReference type="InterPro" id="IPR015912">
    <property type="entry name" value="Phosphofructokinase_CS"/>
</dbReference>
<dbReference type="InterPro" id="IPR000023">
    <property type="entry name" value="Phosphofructokinase_dom"/>
</dbReference>
<dbReference type="InterPro" id="IPR035966">
    <property type="entry name" value="PKF_sf"/>
</dbReference>
<dbReference type="NCBIfam" id="TIGR02482">
    <property type="entry name" value="PFKA_ATP"/>
    <property type="match status" value="1"/>
</dbReference>
<dbReference type="NCBIfam" id="NF002872">
    <property type="entry name" value="PRK03202.1"/>
    <property type="match status" value="1"/>
</dbReference>
<dbReference type="PANTHER" id="PTHR13697:SF4">
    <property type="entry name" value="ATP-DEPENDENT 6-PHOSPHOFRUCTOKINASE"/>
    <property type="match status" value="1"/>
</dbReference>
<dbReference type="PANTHER" id="PTHR13697">
    <property type="entry name" value="PHOSPHOFRUCTOKINASE"/>
    <property type="match status" value="1"/>
</dbReference>
<dbReference type="Pfam" id="PF00365">
    <property type="entry name" value="PFK"/>
    <property type="match status" value="1"/>
</dbReference>
<dbReference type="PIRSF" id="PIRSF000532">
    <property type="entry name" value="ATP_PFK_prok"/>
    <property type="match status" value="1"/>
</dbReference>
<dbReference type="PRINTS" id="PR00476">
    <property type="entry name" value="PHFRCTKINASE"/>
</dbReference>
<dbReference type="SUPFAM" id="SSF53784">
    <property type="entry name" value="Phosphofructokinase"/>
    <property type="match status" value="1"/>
</dbReference>
<dbReference type="PROSITE" id="PS00433">
    <property type="entry name" value="PHOSPHOFRUCTOKINASE"/>
    <property type="match status" value="1"/>
</dbReference>
<reference key="1">
    <citation type="journal article" date="2008" name="DNA Res.">
        <title>Complete genome sequence of Finegoldia magna, an anaerobic opportunistic pathogen.</title>
        <authorList>
            <person name="Goto T."/>
            <person name="Yamashita A."/>
            <person name="Hirakawa H."/>
            <person name="Matsutani M."/>
            <person name="Todo K."/>
            <person name="Ohshima K."/>
            <person name="Toh H."/>
            <person name="Miyamoto K."/>
            <person name="Kuhara S."/>
            <person name="Hattori M."/>
            <person name="Shimizu T."/>
            <person name="Akimoto S."/>
        </authorList>
    </citation>
    <scope>NUCLEOTIDE SEQUENCE [LARGE SCALE GENOMIC DNA]</scope>
    <source>
        <strain>ATCC 29328 / DSM 20472 / WAL 2508</strain>
    </source>
</reference>
<evidence type="ECO:0000255" key="1">
    <source>
        <dbReference type="HAMAP-Rule" id="MF_00339"/>
    </source>
</evidence>
<accession>B0S230</accession>
<organism>
    <name type="scientific">Finegoldia magna (strain ATCC 29328 / DSM 20472 / WAL 2508)</name>
    <name type="common">Peptostreptococcus magnus</name>
    <dbReference type="NCBI Taxonomy" id="334413"/>
    <lineage>
        <taxon>Bacteria</taxon>
        <taxon>Bacillati</taxon>
        <taxon>Bacillota</taxon>
        <taxon>Tissierellia</taxon>
        <taxon>Tissierellales</taxon>
        <taxon>Peptoniphilaceae</taxon>
        <taxon>Finegoldia</taxon>
    </lineage>
</organism>
<keyword id="KW-0021">Allosteric enzyme</keyword>
<keyword id="KW-0067">ATP-binding</keyword>
<keyword id="KW-0963">Cytoplasm</keyword>
<keyword id="KW-0324">Glycolysis</keyword>
<keyword id="KW-0418">Kinase</keyword>
<keyword id="KW-0460">Magnesium</keyword>
<keyword id="KW-0479">Metal-binding</keyword>
<keyword id="KW-0547">Nucleotide-binding</keyword>
<keyword id="KW-1185">Reference proteome</keyword>
<keyword id="KW-0808">Transferase</keyword>
<name>PFKA_FINM2</name>
<comment type="function">
    <text evidence="1">Catalyzes the phosphorylation of D-fructose 6-phosphate to fructose 1,6-bisphosphate by ATP, the first committing step of glycolysis.</text>
</comment>
<comment type="catalytic activity">
    <reaction evidence="1">
        <text>beta-D-fructose 6-phosphate + ATP = beta-D-fructose 1,6-bisphosphate + ADP + H(+)</text>
        <dbReference type="Rhea" id="RHEA:16109"/>
        <dbReference type="ChEBI" id="CHEBI:15378"/>
        <dbReference type="ChEBI" id="CHEBI:30616"/>
        <dbReference type="ChEBI" id="CHEBI:32966"/>
        <dbReference type="ChEBI" id="CHEBI:57634"/>
        <dbReference type="ChEBI" id="CHEBI:456216"/>
        <dbReference type="EC" id="2.7.1.11"/>
    </reaction>
</comment>
<comment type="cofactor">
    <cofactor evidence="1">
        <name>Mg(2+)</name>
        <dbReference type="ChEBI" id="CHEBI:18420"/>
    </cofactor>
</comment>
<comment type="activity regulation">
    <text evidence="1">Allosterically activated by ADP and other diphosphonucleosides, and allosterically inhibited by phosphoenolpyruvate.</text>
</comment>
<comment type="pathway">
    <text evidence="1">Carbohydrate degradation; glycolysis; D-glyceraldehyde 3-phosphate and glycerone phosphate from D-glucose: step 3/4.</text>
</comment>
<comment type="subunit">
    <text evidence="1">Homotetramer.</text>
</comment>
<comment type="subcellular location">
    <subcellularLocation>
        <location evidence="1">Cytoplasm</location>
    </subcellularLocation>
</comment>
<comment type="similarity">
    <text evidence="1">Belongs to the phosphofructokinase type A (PFKA) family. ATP-dependent PFK group I subfamily. Prokaryotic clade 'B1' sub-subfamily.</text>
</comment>